<name>GCH4_STAES</name>
<feature type="chain" id="PRO_0000147730" description="GTP cyclohydrolase FolE2">
    <location>
        <begin position="1"/>
        <end position="292"/>
    </location>
</feature>
<feature type="site" description="May be catalytically important" evidence="1">
    <location>
        <position position="176"/>
    </location>
</feature>
<evidence type="ECO:0000255" key="1">
    <source>
        <dbReference type="HAMAP-Rule" id="MF_01527"/>
    </source>
</evidence>
<organism>
    <name type="scientific">Staphylococcus epidermidis (strain ATCC 12228 / FDA PCI 1200)</name>
    <dbReference type="NCBI Taxonomy" id="176280"/>
    <lineage>
        <taxon>Bacteria</taxon>
        <taxon>Bacillati</taxon>
        <taxon>Bacillota</taxon>
        <taxon>Bacilli</taxon>
        <taxon>Bacillales</taxon>
        <taxon>Staphylococcaceae</taxon>
        <taxon>Staphylococcus</taxon>
    </lineage>
</organism>
<reference key="1">
    <citation type="journal article" date="2003" name="Mol. Microbiol.">
        <title>Genome-based analysis of virulence genes in a non-biofilm-forming Staphylococcus epidermidis strain (ATCC 12228).</title>
        <authorList>
            <person name="Zhang Y.-Q."/>
            <person name="Ren S.-X."/>
            <person name="Li H.-L."/>
            <person name="Wang Y.-X."/>
            <person name="Fu G."/>
            <person name="Yang J."/>
            <person name="Qin Z.-Q."/>
            <person name="Miao Y.-G."/>
            <person name="Wang W.-Y."/>
            <person name="Chen R.-S."/>
            <person name="Shen Y."/>
            <person name="Chen Z."/>
            <person name="Yuan Z.-H."/>
            <person name="Zhao G.-P."/>
            <person name="Qu D."/>
            <person name="Danchin A."/>
            <person name="Wen Y.-M."/>
        </authorList>
    </citation>
    <scope>NUCLEOTIDE SEQUENCE [LARGE SCALE GENOMIC DNA]</scope>
    <source>
        <strain>ATCC 12228 / FDA PCI 1200</strain>
    </source>
</reference>
<accession>Q8CTR6</accession>
<proteinExistence type="inferred from homology"/>
<dbReference type="EC" id="3.5.4.16" evidence="1"/>
<dbReference type="EMBL" id="AE015929">
    <property type="protein sequence ID" value="AAO03934.1"/>
    <property type="molecule type" value="Genomic_DNA"/>
</dbReference>
<dbReference type="RefSeq" id="NP_763892.1">
    <property type="nucleotide sequence ID" value="NC_004461.1"/>
</dbReference>
<dbReference type="RefSeq" id="WP_001832035.1">
    <property type="nucleotide sequence ID" value="NZ_WBME01000045.1"/>
</dbReference>
<dbReference type="SMR" id="Q8CTR6"/>
<dbReference type="GeneID" id="50019500"/>
<dbReference type="KEGG" id="sep:SE_0337"/>
<dbReference type="PATRIC" id="fig|176280.10.peg.310"/>
<dbReference type="eggNOG" id="COG1469">
    <property type="taxonomic scope" value="Bacteria"/>
</dbReference>
<dbReference type="HOGENOM" id="CLU_062816_1_1_9"/>
<dbReference type="OrthoDB" id="9774824at2"/>
<dbReference type="UniPathway" id="UPA00848">
    <property type="reaction ID" value="UER00151"/>
</dbReference>
<dbReference type="Proteomes" id="UP000001411">
    <property type="component" value="Chromosome"/>
</dbReference>
<dbReference type="GO" id="GO:0003934">
    <property type="term" value="F:GTP cyclohydrolase I activity"/>
    <property type="evidence" value="ECO:0007669"/>
    <property type="project" value="UniProtKB-UniRule"/>
</dbReference>
<dbReference type="GO" id="GO:0046654">
    <property type="term" value="P:tetrahydrofolate biosynthetic process"/>
    <property type="evidence" value="ECO:0007669"/>
    <property type="project" value="UniProtKB-UniRule"/>
</dbReference>
<dbReference type="Gene3D" id="3.10.270.10">
    <property type="entry name" value="Urate Oxidase"/>
    <property type="match status" value="1"/>
</dbReference>
<dbReference type="HAMAP" id="MF_01527_B">
    <property type="entry name" value="GTP_cyclohydrol_B"/>
    <property type="match status" value="1"/>
</dbReference>
<dbReference type="InterPro" id="IPR022838">
    <property type="entry name" value="GTP_cyclohydrolase_FolE2"/>
</dbReference>
<dbReference type="InterPro" id="IPR003801">
    <property type="entry name" value="GTP_cyclohydrolase_FolE2/MptA"/>
</dbReference>
<dbReference type="NCBIfam" id="NF010200">
    <property type="entry name" value="PRK13674.1-1"/>
    <property type="match status" value="1"/>
</dbReference>
<dbReference type="PANTHER" id="PTHR36445">
    <property type="entry name" value="GTP CYCLOHYDROLASE MPTA"/>
    <property type="match status" value="1"/>
</dbReference>
<dbReference type="PANTHER" id="PTHR36445:SF1">
    <property type="entry name" value="GTP CYCLOHYDROLASE MPTA"/>
    <property type="match status" value="1"/>
</dbReference>
<dbReference type="Pfam" id="PF02649">
    <property type="entry name" value="GCHY-1"/>
    <property type="match status" value="1"/>
</dbReference>
<keyword id="KW-0378">Hydrolase</keyword>
<sequence length="292" mass="33634">MTEFDLSTREGRWKHFGSVDPVKGTKPTTKNEMTDLQSTHKNFLFEIEEVGIKNLTYPVLIDQYQTAGLFSFSTSLNKNEKGINMSRILESVEKHYDNGIELEFNTLHQLLRTLQDKMNQNAAGVDVSGKWFFDRYSPVTNIKAVGHADVTYGLAIENHTVTRKELTIQAKVTTLCPCSKEISEYSAHNQRGIVTVKAYLDKNNDVIDDYKDKILDAMEANASSILYPILKRPDEKRVTERAYENPRFVEDLIRLIAADLVEFDWIEGFDIECRNEESIHQHDAFARLKYRK</sequence>
<gene>
    <name evidence="1" type="primary">folE2</name>
    <name type="ordered locus">SE_0337</name>
</gene>
<comment type="function">
    <text evidence="1">Converts GTP to 7,8-dihydroneopterin triphosphate.</text>
</comment>
<comment type="catalytic activity">
    <reaction evidence="1">
        <text>GTP + H2O = 7,8-dihydroneopterin 3'-triphosphate + formate + H(+)</text>
        <dbReference type="Rhea" id="RHEA:17473"/>
        <dbReference type="ChEBI" id="CHEBI:15377"/>
        <dbReference type="ChEBI" id="CHEBI:15378"/>
        <dbReference type="ChEBI" id="CHEBI:15740"/>
        <dbReference type="ChEBI" id="CHEBI:37565"/>
        <dbReference type="ChEBI" id="CHEBI:58462"/>
        <dbReference type="EC" id="3.5.4.16"/>
    </reaction>
</comment>
<comment type="pathway">
    <text evidence="1">Cofactor biosynthesis; 7,8-dihydroneopterin triphosphate biosynthesis; 7,8-dihydroneopterin triphosphate from GTP: step 1/1.</text>
</comment>
<comment type="similarity">
    <text evidence="1">Belongs to the GTP cyclohydrolase IV family.</text>
</comment>
<protein>
    <recommendedName>
        <fullName evidence="1">GTP cyclohydrolase FolE2</fullName>
        <ecNumber evidence="1">3.5.4.16</ecNumber>
    </recommendedName>
</protein>